<sequence>MRQTTIVKHKEVNKKWFLIDADGVVLGKLATLTASILRGKNKPDFTPNVDMGDNIVIINAEKVVLTANKEEDKKYYSHSGYPGGLKVINAAKLRAKKPIAIVEKAVKGMLPHTKLGRQQFRNLYVYAGSVHKQEAQQPVRIEVK</sequence>
<proteinExistence type="inferred from homology"/>
<keyword id="KW-1185">Reference proteome</keyword>
<keyword id="KW-0687">Ribonucleoprotein</keyword>
<keyword id="KW-0689">Ribosomal protein</keyword>
<comment type="function">
    <text evidence="1">This protein is one of the early assembly proteins of the 50S ribosomal subunit, although it is not seen to bind rRNA by itself. It is important during the early stages of 50S assembly.</text>
</comment>
<comment type="subunit">
    <text evidence="1">Part of the 50S ribosomal subunit.</text>
</comment>
<comment type="similarity">
    <text evidence="1">Belongs to the universal ribosomal protein uL13 family.</text>
</comment>
<organism>
    <name type="scientific">Mycoplasmopsis pulmonis (strain UAB CTIP)</name>
    <name type="common">Mycoplasma pulmonis</name>
    <dbReference type="NCBI Taxonomy" id="272635"/>
    <lineage>
        <taxon>Bacteria</taxon>
        <taxon>Bacillati</taxon>
        <taxon>Mycoplasmatota</taxon>
        <taxon>Mycoplasmoidales</taxon>
        <taxon>Metamycoplasmataceae</taxon>
        <taxon>Mycoplasmopsis</taxon>
    </lineage>
</organism>
<protein>
    <recommendedName>
        <fullName evidence="1">Large ribosomal subunit protein uL13</fullName>
    </recommendedName>
    <alternativeName>
        <fullName evidence="2">50S ribosomal protein L13</fullName>
    </alternativeName>
</protein>
<gene>
    <name evidence="1" type="primary">rplM</name>
    <name type="ordered locus">MYPU_4950</name>
</gene>
<accession>Q98Q73</accession>
<evidence type="ECO:0000255" key="1">
    <source>
        <dbReference type="HAMAP-Rule" id="MF_01366"/>
    </source>
</evidence>
<evidence type="ECO:0000305" key="2"/>
<name>RL13_MYCPU</name>
<reference key="1">
    <citation type="journal article" date="2001" name="Nucleic Acids Res.">
        <title>The complete genome sequence of the murine respiratory pathogen Mycoplasma pulmonis.</title>
        <authorList>
            <person name="Chambaud I."/>
            <person name="Heilig R."/>
            <person name="Ferris S."/>
            <person name="Barbe V."/>
            <person name="Samson D."/>
            <person name="Galisson F."/>
            <person name="Moszer I."/>
            <person name="Dybvig K."/>
            <person name="Wroblewski H."/>
            <person name="Viari A."/>
            <person name="Rocha E.P.C."/>
            <person name="Blanchard A."/>
        </authorList>
    </citation>
    <scope>NUCLEOTIDE SEQUENCE [LARGE SCALE GENOMIC DNA]</scope>
    <source>
        <strain>UAB CTIP</strain>
    </source>
</reference>
<feature type="chain" id="PRO_1000055415" description="Large ribosomal subunit protein uL13">
    <location>
        <begin position="1"/>
        <end position="144"/>
    </location>
</feature>
<dbReference type="EMBL" id="AL445564">
    <property type="protein sequence ID" value="CAC13668.1"/>
    <property type="molecule type" value="Genomic_DNA"/>
</dbReference>
<dbReference type="PIR" id="G90573">
    <property type="entry name" value="G90573"/>
</dbReference>
<dbReference type="RefSeq" id="WP_010925296.1">
    <property type="nucleotide sequence ID" value="NC_002771.1"/>
</dbReference>
<dbReference type="SMR" id="Q98Q73"/>
<dbReference type="STRING" id="272635.gene:17577096"/>
<dbReference type="KEGG" id="mpu:MYPU_4950"/>
<dbReference type="eggNOG" id="COG0102">
    <property type="taxonomic scope" value="Bacteria"/>
</dbReference>
<dbReference type="HOGENOM" id="CLU_082184_2_2_14"/>
<dbReference type="BioCyc" id="MPUL272635:G1GT6-499-MONOMER"/>
<dbReference type="Proteomes" id="UP000000528">
    <property type="component" value="Chromosome"/>
</dbReference>
<dbReference type="GO" id="GO:0022625">
    <property type="term" value="C:cytosolic large ribosomal subunit"/>
    <property type="evidence" value="ECO:0007669"/>
    <property type="project" value="TreeGrafter"/>
</dbReference>
<dbReference type="GO" id="GO:0003729">
    <property type="term" value="F:mRNA binding"/>
    <property type="evidence" value="ECO:0007669"/>
    <property type="project" value="TreeGrafter"/>
</dbReference>
<dbReference type="GO" id="GO:0003735">
    <property type="term" value="F:structural constituent of ribosome"/>
    <property type="evidence" value="ECO:0007669"/>
    <property type="project" value="InterPro"/>
</dbReference>
<dbReference type="GO" id="GO:0017148">
    <property type="term" value="P:negative regulation of translation"/>
    <property type="evidence" value="ECO:0007669"/>
    <property type="project" value="TreeGrafter"/>
</dbReference>
<dbReference type="GO" id="GO:0006412">
    <property type="term" value="P:translation"/>
    <property type="evidence" value="ECO:0007669"/>
    <property type="project" value="UniProtKB-UniRule"/>
</dbReference>
<dbReference type="CDD" id="cd00392">
    <property type="entry name" value="Ribosomal_L13"/>
    <property type="match status" value="1"/>
</dbReference>
<dbReference type="FunFam" id="3.90.1180.10:FF:000001">
    <property type="entry name" value="50S ribosomal protein L13"/>
    <property type="match status" value="1"/>
</dbReference>
<dbReference type="Gene3D" id="3.90.1180.10">
    <property type="entry name" value="Ribosomal protein L13"/>
    <property type="match status" value="1"/>
</dbReference>
<dbReference type="HAMAP" id="MF_01366">
    <property type="entry name" value="Ribosomal_uL13"/>
    <property type="match status" value="1"/>
</dbReference>
<dbReference type="InterPro" id="IPR005822">
    <property type="entry name" value="Ribosomal_uL13"/>
</dbReference>
<dbReference type="InterPro" id="IPR005823">
    <property type="entry name" value="Ribosomal_uL13_bac-type"/>
</dbReference>
<dbReference type="InterPro" id="IPR023563">
    <property type="entry name" value="Ribosomal_uL13_CS"/>
</dbReference>
<dbReference type="InterPro" id="IPR036899">
    <property type="entry name" value="Ribosomal_uL13_sf"/>
</dbReference>
<dbReference type="NCBIfam" id="TIGR01066">
    <property type="entry name" value="rplM_bact"/>
    <property type="match status" value="1"/>
</dbReference>
<dbReference type="PANTHER" id="PTHR11545:SF2">
    <property type="entry name" value="LARGE RIBOSOMAL SUBUNIT PROTEIN UL13M"/>
    <property type="match status" value="1"/>
</dbReference>
<dbReference type="PANTHER" id="PTHR11545">
    <property type="entry name" value="RIBOSOMAL PROTEIN L13"/>
    <property type="match status" value="1"/>
</dbReference>
<dbReference type="Pfam" id="PF00572">
    <property type="entry name" value="Ribosomal_L13"/>
    <property type="match status" value="1"/>
</dbReference>
<dbReference type="PIRSF" id="PIRSF002181">
    <property type="entry name" value="Ribosomal_L13"/>
    <property type="match status" value="1"/>
</dbReference>
<dbReference type="SUPFAM" id="SSF52161">
    <property type="entry name" value="Ribosomal protein L13"/>
    <property type="match status" value="1"/>
</dbReference>
<dbReference type="PROSITE" id="PS00783">
    <property type="entry name" value="RIBOSOMAL_L13"/>
    <property type="match status" value="1"/>
</dbReference>